<feature type="chain" id="PRO_0000431660" description="T-complex protein 1 subunit gamma">
    <location>
        <begin position="1"/>
        <end position="555"/>
    </location>
</feature>
<feature type="region of interest" description="Disordered" evidence="2">
    <location>
        <begin position="527"/>
        <end position="555"/>
    </location>
</feature>
<evidence type="ECO:0000255" key="1">
    <source>
        <dbReference type="RuleBase" id="RU004187"/>
    </source>
</evidence>
<evidence type="ECO:0000256" key="2">
    <source>
        <dbReference type="SAM" id="MobiDB-lite"/>
    </source>
</evidence>
<evidence type="ECO:0000269" key="3">
    <source>
    </source>
</evidence>
<evidence type="ECO:0000303" key="4">
    <source>
    </source>
</evidence>
<evidence type="ECO:0000303" key="5">
    <source>
    </source>
</evidence>
<evidence type="ECO:0000305" key="6"/>
<evidence type="ECO:0000305" key="7">
    <source>
    </source>
</evidence>
<evidence type="ECO:0000312" key="8">
    <source>
        <dbReference type="Araport" id="AT5G26360"/>
    </source>
</evidence>
<evidence type="ECO:0000312" key="9">
    <source>
        <dbReference type="EMBL" id="AAC26244.1"/>
    </source>
</evidence>
<evidence type="ECO:0000312" key="10">
    <source>
        <dbReference type="EMBL" id="AAO22566.1"/>
    </source>
</evidence>
<proteinExistence type="evidence at protein level"/>
<organism evidence="10">
    <name type="scientific">Arabidopsis thaliana</name>
    <name type="common">Mouse-ear cress</name>
    <dbReference type="NCBI Taxonomy" id="3702"/>
    <lineage>
        <taxon>Eukaryota</taxon>
        <taxon>Viridiplantae</taxon>
        <taxon>Streptophyta</taxon>
        <taxon>Embryophyta</taxon>
        <taxon>Tracheophyta</taxon>
        <taxon>Spermatophyta</taxon>
        <taxon>Magnoliopsida</taxon>
        <taxon>eudicotyledons</taxon>
        <taxon>Gunneridae</taxon>
        <taxon>Pentapetalae</taxon>
        <taxon>rosids</taxon>
        <taxon>malvids</taxon>
        <taxon>Brassicales</taxon>
        <taxon>Brassicaceae</taxon>
        <taxon>Camelineae</taxon>
        <taxon>Arabidopsis</taxon>
    </lineage>
</organism>
<accession>Q84WV1</accession>
<accession>O81503</accession>
<sequence length="555" mass="60339">MHAPVLVLSDSLKRESGSKVHHGNIQASKAVADIIRTTLGPRSMLKMLLDAGGGIVVTNDGNAILRELDVAHPAAKSMIELSRTQDEEVGDGTTSVIVLAGEMLHVAEAFLEKNYHPTVICRAYIKALEDSIAVLDKIAMSIDINDRSQVLGLVKSCIGTKFTSQFGDLIADLAIDATTTVGVDLGQGLREVDIKKYIKVEKVPGGQFEDSEVLKGVMFNKDVVAPGKMKRKIVNPRIILLDCPLEYKKGENQTNAELVREEDWEVLLKLEEEYIENICVQILKFKPDLVITEKGLSDLACHYFSKAGVSAIRRLRKTDNNRIAKACGAVIVNRPDELQESDIGTGAGLFEVKKIGDDFFSFIVDCKEPKACTVLLRGPSKDFINEVERNLQDAMSVARNIIKNPKLVPGGGATELTVSATLKQKSATIEGIEKWPYEAAAIAFEAIPRTLAQNCGVNVIRTMTALQGKHANGENAWTGIDGNTGAIADMKESKIWDSYNVKAQTFKTAIEAACMLLRIDDIVSGIKKKQAPGSGPSKPTIETEGDADNEQILPD</sequence>
<keyword id="KW-0067">ATP-binding</keyword>
<keyword id="KW-0143">Chaperone</keyword>
<keyword id="KW-0963">Cytoplasm</keyword>
<keyword id="KW-0547">Nucleotide-binding</keyword>
<keyword id="KW-1185">Reference proteome</keyword>
<name>TCPG_ARATH</name>
<protein>
    <recommendedName>
        <fullName evidence="4">T-complex protein 1 subunit gamma</fullName>
        <shortName evidence="4">TCP-1-gamma</shortName>
    </recommendedName>
    <alternativeName>
        <fullName evidence="4">CCT-gamma</fullName>
    </alternativeName>
    <alternativeName>
        <fullName evidence="5">Chaperonin CCT3</fullName>
    </alternativeName>
</protein>
<comment type="function">
    <text evidence="6">Molecular chaperone; assists the folding of proteins upon ATP hydrolysis. Known to play a role, in vitro, in the folding of actin and tubulin.</text>
</comment>
<comment type="subunit">
    <text evidence="3 7">Heterooligomeric complex of about 850 to 900 kDa that forms two stacked rings, 12 to 16 nm in diameter (PubMed:11599560). Interacts with CCT8 (PubMed:21868675).</text>
</comment>
<comment type="subcellular location">
    <subcellularLocation>
        <location evidence="6">Cytoplasm</location>
    </subcellularLocation>
</comment>
<comment type="disruption phenotype">
    <text evidence="3">Embryonic lethal.</text>
</comment>
<comment type="similarity">
    <text evidence="1">Belongs to the TCP-1 chaperonin family.</text>
</comment>
<comment type="sequence caution" evidence="6">
    <conflict type="erroneous gene model prediction">
        <sequence resource="EMBL-CDS" id="AAC26244"/>
    </conflict>
</comment>
<reference key="1">
    <citation type="journal article" date="2000" name="Nature">
        <title>Sequence and analysis of chromosome 5 of the plant Arabidopsis thaliana.</title>
        <authorList>
            <person name="Tabata S."/>
            <person name="Kaneko T."/>
            <person name="Nakamura Y."/>
            <person name="Kotani H."/>
            <person name="Kato T."/>
            <person name="Asamizu E."/>
            <person name="Miyajima N."/>
            <person name="Sasamoto S."/>
            <person name="Kimura T."/>
            <person name="Hosouchi T."/>
            <person name="Kawashima K."/>
            <person name="Kohara M."/>
            <person name="Matsumoto M."/>
            <person name="Matsuno A."/>
            <person name="Muraki A."/>
            <person name="Nakayama S."/>
            <person name="Nakazaki N."/>
            <person name="Naruo K."/>
            <person name="Okumura S."/>
            <person name="Shinpo S."/>
            <person name="Takeuchi C."/>
            <person name="Wada T."/>
            <person name="Watanabe A."/>
            <person name="Yamada M."/>
            <person name="Yasuda M."/>
            <person name="Sato S."/>
            <person name="de la Bastide M."/>
            <person name="Huang E."/>
            <person name="Spiegel L."/>
            <person name="Gnoj L."/>
            <person name="O'Shaughnessy A."/>
            <person name="Preston R."/>
            <person name="Habermann K."/>
            <person name="Murray J."/>
            <person name="Johnson D."/>
            <person name="Rohlfing T."/>
            <person name="Nelson J."/>
            <person name="Stoneking T."/>
            <person name="Pepin K."/>
            <person name="Spieth J."/>
            <person name="Sekhon M."/>
            <person name="Armstrong J."/>
            <person name="Becker M."/>
            <person name="Belter E."/>
            <person name="Cordum H."/>
            <person name="Cordes M."/>
            <person name="Courtney L."/>
            <person name="Courtney W."/>
            <person name="Dante M."/>
            <person name="Du H."/>
            <person name="Edwards J."/>
            <person name="Fryman J."/>
            <person name="Haakensen B."/>
            <person name="Lamar E."/>
            <person name="Latreille P."/>
            <person name="Leonard S."/>
            <person name="Meyer R."/>
            <person name="Mulvaney E."/>
            <person name="Ozersky P."/>
            <person name="Riley A."/>
            <person name="Strowmatt C."/>
            <person name="Wagner-McPherson C."/>
            <person name="Wollam A."/>
            <person name="Yoakum M."/>
            <person name="Bell M."/>
            <person name="Dedhia N."/>
            <person name="Parnell L."/>
            <person name="Shah R."/>
            <person name="Rodriguez M."/>
            <person name="Hoon See L."/>
            <person name="Vil D."/>
            <person name="Baker J."/>
            <person name="Kirchoff K."/>
            <person name="Toth K."/>
            <person name="King L."/>
            <person name="Bahret A."/>
            <person name="Miller B."/>
            <person name="Marra M.A."/>
            <person name="Martienssen R."/>
            <person name="McCombie W.R."/>
            <person name="Wilson R.K."/>
            <person name="Murphy G."/>
            <person name="Bancroft I."/>
            <person name="Volckaert G."/>
            <person name="Wambutt R."/>
            <person name="Duesterhoeft A."/>
            <person name="Stiekema W."/>
            <person name="Pohl T."/>
            <person name="Entian K.-D."/>
            <person name="Terryn N."/>
            <person name="Hartley N."/>
            <person name="Bent E."/>
            <person name="Johnson S."/>
            <person name="Langham S.-A."/>
            <person name="McCullagh B."/>
            <person name="Robben J."/>
            <person name="Grymonprez B."/>
            <person name="Zimmermann W."/>
            <person name="Ramsperger U."/>
            <person name="Wedler H."/>
            <person name="Balke K."/>
            <person name="Wedler E."/>
            <person name="Peters S."/>
            <person name="van Staveren M."/>
            <person name="Dirkse W."/>
            <person name="Mooijman P."/>
            <person name="Klein Lankhorst R."/>
            <person name="Weitzenegger T."/>
            <person name="Bothe G."/>
            <person name="Rose M."/>
            <person name="Hauf J."/>
            <person name="Berneiser S."/>
            <person name="Hempel S."/>
            <person name="Feldpausch M."/>
            <person name="Lamberth S."/>
            <person name="Villarroel R."/>
            <person name="Gielen J."/>
            <person name="Ardiles W."/>
            <person name="Bents O."/>
            <person name="Lemcke K."/>
            <person name="Kolesov G."/>
            <person name="Mayer K.F.X."/>
            <person name="Rudd S."/>
            <person name="Schoof H."/>
            <person name="Schueller C."/>
            <person name="Zaccaria P."/>
            <person name="Mewes H.-W."/>
            <person name="Bevan M."/>
            <person name="Fransz P.F."/>
        </authorList>
    </citation>
    <scope>NUCLEOTIDE SEQUENCE [LARGE SCALE GENOMIC DNA]</scope>
    <source>
        <strain>cv. Columbia</strain>
    </source>
</reference>
<reference key="2">
    <citation type="journal article" date="2017" name="Plant J.">
        <title>Araport11: a complete reannotation of the Arabidopsis thaliana reference genome.</title>
        <authorList>
            <person name="Cheng C.Y."/>
            <person name="Krishnakumar V."/>
            <person name="Chan A.P."/>
            <person name="Thibaud-Nissen F."/>
            <person name="Schobel S."/>
            <person name="Town C.D."/>
        </authorList>
    </citation>
    <scope>GENOME REANNOTATION</scope>
    <source>
        <strain>cv. Columbia</strain>
    </source>
</reference>
<reference key="3">
    <citation type="journal article" date="2003" name="Science">
        <title>Empirical analysis of transcriptional activity in the Arabidopsis genome.</title>
        <authorList>
            <person name="Yamada K."/>
            <person name="Lim J."/>
            <person name="Dale J.M."/>
            <person name="Chen H."/>
            <person name="Shinn P."/>
            <person name="Palm C.J."/>
            <person name="Southwick A.M."/>
            <person name="Wu H.C."/>
            <person name="Kim C.J."/>
            <person name="Nguyen M."/>
            <person name="Pham P.K."/>
            <person name="Cheuk R.F."/>
            <person name="Karlin-Newmann G."/>
            <person name="Liu S.X."/>
            <person name="Lam B."/>
            <person name="Sakano H."/>
            <person name="Wu T."/>
            <person name="Yu G."/>
            <person name="Miranda M."/>
            <person name="Quach H.L."/>
            <person name="Tripp M."/>
            <person name="Chang C.H."/>
            <person name="Lee J.M."/>
            <person name="Toriumi M.J."/>
            <person name="Chan M.M."/>
            <person name="Tang C.C."/>
            <person name="Onodera C.S."/>
            <person name="Deng J.M."/>
            <person name="Akiyama K."/>
            <person name="Ansari Y."/>
            <person name="Arakawa T."/>
            <person name="Banh J."/>
            <person name="Banno F."/>
            <person name="Bowser L."/>
            <person name="Brooks S.Y."/>
            <person name="Carninci P."/>
            <person name="Chao Q."/>
            <person name="Choy N."/>
            <person name="Enju A."/>
            <person name="Goldsmith A.D."/>
            <person name="Gurjal M."/>
            <person name="Hansen N.F."/>
            <person name="Hayashizaki Y."/>
            <person name="Johnson-Hopson C."/>
            <person name="Hsuan V.W."/>
            <person name="Iida K."/>
            <person name="Karnes M."/>
            <person name="Khan S."/>
            <person name="Koesema E."/>
            <person name="Ishida J."/>
            <person name="Jiang P.X."/>
            <person name="Jones T."/>
            <person name="Kawai J."/>
            <person name="Kamiya A."/>
            <person name="Meyers C."/>
            <person name="Nakajima M."/>
            <person name="Narusaka M."/>
            <person name="Seki M."/>
            <person name="Sakurai T."/>
            <person name="Satou M."/>
            <person name="Tamse R."/>
            <person name="Vaysberg M."/>
            <person name="Wallender E.K."/>
            <person name="Wong C."/>
            <person name="Yamamura Y."/>
            <person name="Yuan S."/>
            <person name="Shinozaki K."/>
            <person name="Davis R.W."/>
            <person name="Theologis A."/>
            <person name="Ecker J.R."/>
        </authorList>
    </citation>
    <scope>NUCLEOTIDE SEQUENCE [LARGE SCALE MRNA]</scope>
    <source>
        <strain>cv. Columbia</strain>
    </source>
</reference>
<reference key="4">
    <citation type="journal article" date="2001" name="Cell Stress Chaperones">
        <title>Arabidopsis thaliana type I and II chaperonins.</title>
        <authorList>
            <person name="Hill J.E."/>
            <person name="Hemmingsen S.M."/>
        </authorList>
    </citation>
    <scope>GENE FAMILY</scope>
    <scope>NOMENCLATURE</scope>
    <scope>SUBUNIT</scope>
</reference>
<reference key="5">
    <citation type="journal article" date="2011" name="Science">
        <title>Chaperonins facilitate KNOTTED1 cell-to-cell trafficking and stem cell function.</title>
        <authorList>
            <person name="Xu X.M."/>
            <person name="Wang J."/>
            <person name="Xuan Z."/>
            <person name="Goldshmidt A."/>
            <person name="Borrill P.G."/>
            <person name="Hariharan N."/>
            <person name="Kim J.Y."/>
            <person name="Jackson D."/>
        </authorList>
    </citation>
    <scope>DISRUPTION PHENOTYPE</scope>
    <scope>INTERACTION WITH CCT8</scope>
</reference>
<gene>
    <name evidence="5" type="primary">CCT3</name>
    <name evidence="8" type="ordered locus">At5g26360</name>
    <name evidence="9" type="ORF">F9D12.18</name>
</gene>
<dbReference type="EMBL" id="AF077407">
    <property type="protein sequence ID" value="AAC26244.1"/>
    <property type="status" value="ALT_SEQ"/>
    <property type="molecule type" value="Genomic_DNA"/>
</dbReference>
<dbReference type="EMBL" id="CP002688">
    <property type="protein sequence ID" value="AED93554.1"/>
    <property type="molecule type" value="Genomic_DNA"/>
</dbReference>
<dbReference type="EMBL" id="BT002737">
    <property type="protein sequence ID" value="AAO22566.1"/>
    <property type="molecule type" value="mRNA"/>
</dbReference>
<dbReference type="PIR" id="T01855">
    <property type="entry name" value="T01855"/>
</dbReference>
<dbReference type="RefSeq" id="NP_198008.1">
    <property type="nucleotide sequence ID" value="NM_122537.4"/>
</dbReference>
<dbReference type="SMR" id="Q84WV1"/>
<dbReference type="FunCoup" id="Q84WV1">
    <property type="interactions" value="5390"/>
</dbReference>
<dbReference type="IntAct" id="Q84WV1">
    <property type="interactions" value="11"/>
</dbReference>
<dbReference type="STRING" id="3702.Q84WV1"/>
<dbReference type="iPTMnet" id="Q84WV1"/>
<dbReference type="MetOSite" id="Q84WV1"/>
<dbReference type="SwissPalm" id="Q84WV1"/>
<dbReference type="PaxDb" id="3702-AT5G26360.1"/>
<dbReference type="ProteomicsDB" id="234166"/>
<dbReference type="EnsemblPlants" id="AT5G26360.1">
    <property type="protein sequence ID" value="AT5G26360.1"/>
    <property type="gene ID" value="AT5G26360"/>
</dbReference>
<dbReference type="GeneID" id="832705"/>
<dbReference type="Gramene" id="AT5G26360.1">
    <property type="protein sequence ID" value="AT5G26360.1"/>
    <property type="gene ID" value="AT5G26360"/>
</dbReference>
<dbReference type="KEGG" id="ath:AT5G26360"/>
<dbReference type="Araport" id="AT5G26360"/>
<dbReference type="TAIR" id="AT5G26360"/>
<dbReference type="eggNOG" id="KOG0364">
    <property type="taxonomic scope" value="Eukaryota"/>
</dbReference>
<dbReference type="HOGENOM" id="CLU_008891_7_3_1"/>
<dbReference type="InParanoid" id="Q84WV1"/>
<dbReference type="OMA" id="CGGSTIR"/>
<dbReference type="OrthoDB" id="10248520at2759"/>
<dbReference type="PhylomeDB" id="Q84WV1"/>
<dbReference type="BRENDA" id="3.6.4.B10">
    <property type="organism ID" value="399"/>
</dbReference>
<dbReference type="CD-CODE" id="4299E36E">
    <property type="entry name" value="Nucleolus"/>
</dbReference>
<dbReference type="PRO" id="PR:Q84WV1"/>
<dbReference type="Proteomes" id="UP000006548">
    <property type="component" value="Chromosome 5"/>
</dbReference>
<dbReference type="ExpressionAtlas" id="Q84WV1">
    <property type="expression patterns" value="baseline and differential"/>
</dbReference>
<dbReference type="GO" id="GO:0005832">
    <property type="term" value="C:chaperonin-containing T-complex"/>
    <property type="evidence" value="ECO:0007669"/>
    <property type="project" value="UniProtKB-ARBA"/>
</dbReference>
<dbReference type="GO" id="GO:0009536">
    <property type="term" value="C:plastid"/>
    <property type="evidence" value="ECO:0007005"/>
    <property type="project" value="TAIR"/>
</dbReference>
<dbReference type="GO" id="GO:0005524">
    <property type="term" value="F:ATP binding"/>
    <property type="evidence" value="ECO:0007669"/>
    <property type="project" value="UniProtKB-KW"/>
</dbReference>
<dbReference type="GO" id="GO:0016887">
    <property type="term" value="F:ATP hydrolysis activity"/>
    <property type="evidence" value="ECO:0007669"/>
    <property type="project" value="InterPro"/>
</dbReference>
<dbReference type="GO" id="GO:0140662">
    <property type="term" value="F:ATP-dependent protein folding chaperone"/>
    <property type="evidence" value="ECO:0007669"/>
    <property type="project" value="InterPro"/>
</dbReference>
<dbReference type="GO" id="GO:0051082">
    <property type="term" value="F:unfolded protein binding"/>
    <property type="evidence" value="ECO:0007669"/>
    <property type="project" value="InterPro"/>
</dbReference>
<dbReference type="CDD" id="cd03337">
    <property type="entry name" value="TCP1_gamma"/>
    <property type="match status" value="1"/>
</dbReference>
<dbReference type="FunFam" id="1.10.560.10:FF:000034">
    <property type="entry name" value="T-complex protein 1 subunit gamma"/>
    <property type="match status" value="1"/>
</dbReference>
<dbReference type="FunFam" id="1.10.560.10:FF:000037">
    <property type="entry name" value="T-complex protein 1 subunit gamma"/>
    <property type="match status" value="1"/>
</dbReference>
<dbReference type="FunFam" id="3.50.7.10:FF:000005">
    <property type="entry name" value="T-complex protein 1 subunit gamma"/>
    <property type="match status" value="1"/>
</dbReference>
<dbReference type="Gene3D" id="3.50.7.10">
    <property type="entry name" value="GroEL"/>
    <property type="match status" value="1"/>
</dbReference>
<dbReference type="Gene3D" id="1.10.560.10">
    <property type="entry name" value="GroEL-like equatorial domain"/>
    <property type="match status" value="1"/>
</dbReference>
<dbReference type="Gene3D" id="3.30.260.10">
    <property type="entry name" value="TCP-1-like chaperonin intermediate domain"/>
    <property type="match status" value="1"/>
</dbReference>
<dbReference type="InterPro" id="IPR012719">
    <property type="entry name" value="Chap_CCT_gamma"/>
</dbReference>
<dbReference type="InterPro" id="IPR017998">
    <property type="entry name" value="Chaperone_TCP-1"/>
</dbReference>
<dbReference type="InterPro" id="IPR002194">
    <property type="entry name" value="Chaperonin_TCP-1_CS"/>
</dbReference>
<dbReference type="InterPro" id="IPR002423">
    <property type="entry name" value="Cpn60/GroEL/TCP-1"/>
</dbReference>
<dbReference type="InterPro" id="IPR027409">
    <property type="entry name" value="GroEL-like_apical_dom_sf"/>
</dbReference>
<dbReference type="InterPro" id="IPR027413">
    <property type="entry name" value="GROEL-like_equatorial_sf"/>
</dbReference>
<dbReference type="InterPro" id="IPR027410">
    <property type="entry name" value="TCP-1-like_intermed_sf"/>
</dbReference>
<dbReference type="InterPro" id="IPR053374">
    <property type="entry name" value="TCP-1_chaperonin"/>
</dbReference>
<dbReference type="InterPro" id="IPR054827">
    <property type="entry name" value="thermosome_alpha"/>
</dbReference>
<dbReference type="NCBIfam" id="TIGR02344">
    <property type="entry name" value="chap_CCT_gamma"/>
    <property type="match status" value="1"/>
</dbReference>
<dbReference type="NCBIfam" id="NF041082">
    <property type="entry name" value="thermosome_alpha"/>
    <property type="match status" value="1"/>
</dbReference>
<dbReference type="NCBIfam" id="NF041083">
    <property type="entry name" value="thermosome_beta"/>
    <property type="match status" value="1"/>
</dbReference>
<dbReference type="PANTHER" id="PTHR11353">
    <property type="entry name" value="CHAPERONIN"/>
    <property type="match status" value="1"/>
</dbReference>
<dbReference type="Pfam" id="PF00118">
    <property type="entry name" value="Cpn60_TCP1"/>
    <property type="match status" value="1"/>
</dbReference>
<dbReference type="PRINTS" id="PR00304">
    <property type="entry name" value="TCOMPLEXTCP1"/>
</dbReference>
<dbReference type="SUPFAM" id="SSF52029">
    <property type="entry name" value="GroEL apical domain-like"/>
    <property type="match status" value="1"/>
</dbReference>
<dbReference type="SUPFAM" id="SSF48592">
    <property type="entry name" value="GroEL equatorial domain-like"/>
    <property type="match status" value="1"/>
</dbReference>
<dbReference type="SUPFAM" id="SSF54849">
    <property type="entry name" value="GroEL-intermediate domain like"/>
    <property type="match status" value="1"/>
</dbReference>
<dbReference type="PROSITE" id="PS00750">
    <property type="entry name" value="TCP1_1"/>
    <property type="match status" value="1"/>
</dbReference>
<dbReference type="PROSITE" id="PS00751">
    <property type="entry name" value="TCP1_2"/>
    <property type="match status" value="1"/>
</dbReference>
<dbReference type="PROSITE" id="PS00995">
    <property type="entry name" value="TCP1_3"/>
    <property type="match status" value="1"/>
</dbReference>